<comment type="similarity">
    <text evidence="3">Belongs to the DRM1/ARP family.</text>
</comment>
<comment type="sequence caution" evidence="3">
    <conflict type="erroneous gene model prediction">
        <sequence resource="EMBL-CDS" id="AAD25779"/>
    </conflict>
</comment>
<organism evidence="6">
    <name type="scientific">Arabidopsis thaliana</name>
    <name type="common">Mouse-ear cress</name>
    <dbReference type="NCBI Taxonomy" id="3702"/>
    <lineage>
        <taxon>Eukaryota</taxon>
        <taxon>Viridiplantae</taxon>
        <taxon>Streptophyta</taxon>
        <taxon>Embryophyta</taxon>
        <taxon>Tracheophyta</taxon>
        <taxon>Spermatophyta</taxon>
        <taxon>Magnoliopsida</taxon>
        <taxon>eudicotyledons</taxon>
        <taxon>Gunneridae</taxon>
        <taxon>Pentapetalae</taxon>
        <taxon>rosids</taxon>
        <taxon>malvids</taxon>
        <taxon>Brassicales</taxon>
        <taxon>Brassicaceae</taxon>
        <taxon>Camelineae</taxon>
        <taxon>Arabidopsis</taxon>
    </lineage>
</organism>
<protein>
    <recommendedName>
        <fullName evidence="3">Dormancy-associated protein homolog 4</fullName>
    </recommendedName>
    <alternativeName>
        <fullName evidence="3">DRM1 homolog 4</fullName>
    </alternativeName>
</protein>
<sequence>MGFLHKLWDETVAGPTPDNGLGKLRKHDSLSTVRSSPPSLSSDQVTRSIMVTKGNNNVRGLRKLKMDPDSPTCSSSNPGTPLTPGTPCYALGPFTAGKIPSSGEDDAASLTTYEWIVINALDR</sequence>
<dbReference type="EMBL" id="AC006577">
    <property type="protein sequence ID" value="AAD25779.1"/>
    <property type="status" value="ALT_SEQ"/>
    <property type="molecule type" value="Genomic_DNA"/>
</dbReference>
<dbReference type="EMBL" id="CP002684">
    <property type="protein sequence ID" value="AEE33043.1"/>
    <property type="molecule type" value="Genomic_DNA"/>
</dbReference>
<dbReference type="PIR" id="D96581">
    <property type="entry name" value="D96581"/>
</dbReference>
<dbReference type="RefSeq" id="NP_175809.1">
    <property type="nucleotide sequence ID" value="NM_104284.2"/>
</dbReference>
<dbReference type="FunCoup" id="F4HV65">
    <property type="interactions" value="4"/>
</dbReference>
<dbReference type="STRING" id="3702.F4HV65"/>
<dbReference type="GlyGen" id="F4HV65">
    <property type="glycosylation" value="1 site"/>
</dbReference>
<dbReference type="PaxDb" id="3702-AT1G54070.1"/>
<dbReference type="ProteomicsDB" id="224358"/>
<dbReference type="EnsemblPlants" id="AT1G54070.1">
    <property type="protein sequence ID" value="AT1G54070.1"/>
    <property type="gene ID" value="AT1G54070"/>
</dbReference>
<dbReference type="GeneID" id="841845"/>
<dbReference type="Gramene" id="AT1G54070.1">
    <property type="protein sequence ID" value="AT1G54070.1"/>
    <property type="gene ID" value="AT1G54070"/>
</dbReference>
<dbReference type="KEGG" id="ath:AT1G54070"/>
<dbReference type="Araport" id="AT1G54070"/>
<dbReference type="TAIR" id="AT1G54070"/>
<dbReference type="eggNOG" id="ENOG502S2D5">
    <property type="taxonomic scope" value="Eukaryota"/>
</dbReference>
<dbReference type="HOGENOM" id="CLU_116501_0_0_1"/>
<dbReference type="InParanoid" id="F4HV65"/>
<dbReference type="OMA" id="MSPCFLT"/>
<dbReference type="OrthoDB" id="2012405at2759"/>
<dbReference type="PRO" id="PR:F4HV65"/>
<dbReference type="Proteomes" id="UP000006548">
    <property type="component" value="Chromosome 1"/>
</dbReference>
<dbReference type="ExpressionAtlas" id="F4HV65">
    <property type="expression patterns" value="baseline and differential"/>
</dbReference>
<dbReference type="InterPro" id="IPR008406">
    <property type="entry name" value="DRM/ARP"/>
</dbReference>
<dbReference type="PANTHER" id="PTHR33565">
    <property type="entry name" value="DORMANCY-ASSOCIATED PROTEIN 1"/>
    <property type="match status" value="1"/>
</dbReference>
<dbReference type="PANTHER" id="PTHR33565:SF20">
    <property type="entry name" value="DORMANCY-ASSOCIATED PROTEIN HOMOLOG 4"/>
    <property type="match status" value="1"/>
</dbReference>
<dbReference type="Pfam" id="PF05564">
    <property type="entry name" value="Auxin_repressed"/>
    <property type="match status" value="1"/>
</dbReference>
<proteinExistence type="inferred from homology"/>
<evidence type="ECO:0000250" key="1">
    <source>
        <dbReference type="UniProtKB" id="P93017"/>
    </source>
</evidence>
<evidence type="ECO:0000256" key="2">
    <source>
        <dbReference type="SAM" id="MobiDB-lite"/>
    </source>
</evidence>
<evidence type="ECO:0000305" key="3"/>
<evidence type="ECO:0000312" key="4">
    <source>
        <dbReference type="Araport" id="AT1G54070"/>
    </source>
</evidence>
<evidence type="ECO:0000312" key="5">
    <source>
        <dbReference type="EMBL" id="AAD25779.1"/>
    </source>
</evidence>
<evidence type="ECO:0000312" key="6">
    <source>
        <dbReference type="Proteomes" id="UP000006548"/>
    </source>
</evidence>
<gene>
    <name evidence="4" type="ordered locus">At1g54070</name>
    <name evidence="5" type="ORF">F15I1.15</name>
</gene>
<keyword id="KW-0597">Phosphoprotein</keyword>
<keyword id="KW-1185">Reference proteome</keyword>
<reference key="1">
    <citation type="journal article" date="2000" name="Nature">
        <title>Sequence and analysis of chromosome 1 of the plant Arabidopsis thaliana.</title>
        <authorList>
            <person name="Theologis A."/>
            <person name="Ecker J.R."/>
            <person name="Palm C.J."/>
            <person name="Federspiel N.A."/>
            <person name="Kaul S."/>
            <person name="White O."/>
            <person name="Alonso J."/>
            <person name="Altafi H."/>
            <person name="Araujo R."/>
            <person name="Bowman C.L."/>
            <person name="Brooks S.Y."/>
            <person name="Buehler E."/>
            <person name="Chan A."/>
            <person name="Chao Q."/>
            <person name="Chen H."/>
            <person name="Cheuk R.F."/>
            <person name="Chin C.W."/>
            <person name="Chung M.K."/>
            <person name="Conn L."/>
            <person name="Conway A.B."/>
            <person name="Conway A.R."/>
            <person name="Creasy T.H."/>
            <person name="Dewar K."/>
            <person name="Dunn P."/>
            <person name="Etgu P."/>
            <person name="Feldblyum T.V."/>
            <person name="Feng J.-D."/>
            <person name="Fong B."/>
            <person name="Fujii C.Y."/>
            <person name="Gill J.E."/>
            <person name="Goldsmith A.D."/>
            <person name="Haas B."/>
            <person name="Hansen N.F."/>
            <person name="Hughes B."/>
            <person name="Huizar L."/>
            <person name="Hunter J.L."/>
            <person name="Jenkins J."/>
            <person name="Johnson-Hopson C."/>
            <person name="Khan S."/>
            <person name="Khaykin E."/>
            <person name="Kim C.J."/>
            <person name="Koo H.L."/>
            <person name="Kremenetskaia I."/>
            <person name="Kurtz D.B."/>
            <person name="Kwan A."/>
            <person name="Lam B."/>
            <person name="Langin-Hooper S."/>
            <person name="Lee A."/>
            <person name="Lee J.M."/>
            <person name="Lenz C.A."/>
            <person name="Li J.H."/>
            <person name="Li Y.-P."/>
            <person name="Lin X."/>
            <person name="Liu S.X."/>
            <person name="Liu Z.A."/>
            <person name="Luros J.S."/>
            <person name="Maiti R."/>
            <person name="Marziali A."/>
            <person name="Militscher J."/>
            <person name="Miranda M."/>
            <person name="Nguyen M."/>
            <person name="Nierman W.C."/>
            <person name="Osborne B.I."/>
            <person name="Pai G."/>
            <person name="Peterson J."/>
            <person name="Pham P.K."/>
            <person name="Rizzo M."/>
            <person name="Rooney T."/>
            <person name="Rowley D."/>
            <person name="Sakano H."/>
            <person name="Salzberg S.L."/>
            <person name="Schwartz J.R."/>
            <person name="Shinn P."/>
            <person name="Southwick A.M."/>
            <person name="Sun H."/>
            <person name="Tallon L.J."/>
            <person name="Tambunga G."/>
            <person name="Toriumi M.J."/>
            <person name="Town C.D."/>
            <person name="Utterback T."/>
            <person name="Van Aken S."/>
            <person name="Vaysberg M."/>
            <person name="Vysotskaia V.S."/>
            <person name="Walker M."/>
            <person name="Wu D."/>
            <person name="Yu G."/>
            <person name="Fraser C.M."/>
            <person name="Venter J.C."/>
            <person name="Davis R.W."/>
        </authorList>
    </citation>
    <scope>NUCLEOTIDE SEQUENCE [LARGE SCALE GENOMIC DNA]</scope>
    <source>
        <strain>cv. Columbia</strain>
    </source>
</reference>
<reference key="2">
    <citation type="journal article" date="2017" name="Plant J.">
        <title>Araport11: a complete reannotation of the Arabidopsis thaliana reference genome.</title>
        <authorList>
            <person name="Cheng C.Y."/>
            <person name="Krishnakumar V."/>
            <person name="Chan A.P."/>
            <person name="Thibaud-Nissen F."/>
            <person name="Schobel S."/>
            <person name="Town C.D."/>
        </authorList>
    </citation>
    <scope>GENOME REANNOTATION</scope>
    <source>
        <strain>cv. Columbia</strain>
    </source>
</reference>
<name>DRMH4_ARATH</name>
<accession>F4HV65</accession>
<accession>Q9SYG3</accession>
<feature type="chain" id="PRO_0000436083" description="Dormancy-associated protein homolog 4">
    <location>
        <begin position="1"/>
        <end position="123"/>
    </location>
</feature>
<feature type="region of interest" description="Disordered" evidence="2">
    <location>
        <begin position="7"/>
        <end position="86"/>
    </location>
</feature>
<feature type="compositionally biased region" description="Low complexity" evidence="2">
    <location>
        <begin position="30"/>
        <end position="46"/>
    </location>
</feature>
<feature type="compositionally biased region" description="Polar residues" evidence="2">
    <location>
        <begin position="47"/>
        <end position="58"/>
    </location>
</feature>
<feature type="compositionally biased region" description="Polar residues" evidence="2">
    <location>
        <begin position="71"/>
        <end position="80"/>
    </location>
</feature>
<feature type="modified residue" description="Phosphoserine" evidence="1">
    <location>
        <position position="74"/>
    </location>
</feature>